<gene>
    <name type="primary">hypC</name>
    <name type="synonym">hupC</name>
</gene>
<sequence length="84" mass="8959">MCLAIPVRIEELLDEQSAVACIGGLRKTINVALLDDLKVGDYVILHVGFALQKLDEAEARRTLALLAELGQLAEAEQAAQGDAS</sequence>
<accession>Q43951</accession>
<dbReference type="EMBL" id="L00674">
    <property type="protein sequence ID" value="AAA22135.1"/>
    <property type="molecule type" value="Genomic_DNA"/>
</dbReference>
<dbReference type="PIR" id="JN0649">
    <property type="entry name" value="JN0649"/>
</dbReference>
<dbReference type="SMR" id="Q43951"/>
<dbReference type="UniPathway" id="UPA00335"/>
<dbReference type="GO" id="GO:1902670">
    <property type="term" value="F:carbon dioxide binding"/>
    <property type="evidence" value="ECO:0007669"/>
    <property type="project" value="TreeGrafter"/>
</dbReference>
<dbReference type="GO" id="GO:0005506">
    <property type="term" value="F:iron ion binding"/>
    <property type="evidence" value="ECO:0007669"/>
    <property type="project" value="TreeGrafter"/>
</dbReference>
<dbReference type="GO" id="GO:0051604">
    <property type="term" value="P:protein maturation"/>
    <property type="evidence" value="ECO:0007669"/>
    <property type="project" value="TreeGrafter"/>
</dbReference>
<dbReference type="FunFam" id="2.30.30.140:FF:000022">
    <property type="entry name" value="Hydrogenase assembly chaperone HybG"/>
    <property type="match status" value="1"/>
</dbReference>
<dbReference type="Gene3D" id="2.30.30.140">
    <property type="match status" value="1"/>
</dbReference>
<dbReference type="InterPro" id="IPR019812">
    <property type="entry name" value="Hydgase_assmbl_chp_CS"/>
</dbReference>
<dbReference type="InterPro" id="IPR001109">
    <property type="entry name" value="Hydrogenase_HupF/HypC"/>
</dbReference>
<dbReference type="NCBIfam" id="TIGR00074">
    <property type="entry name" value="hypC_hupF"/>
    <property type="match status" value="1"/>
</dbReference>
<dbReference type="PANTHER" id="PTHR35177">
    <property type="entry name" value="HYDROGENASE MATURATION FACTOR HYBG"/>
    <property type="match status" value="1"/>
</dbReference>
<dbReference type="PANTHER" id="PTHR35177:SF2">
    <property type="entry name" value="HYDROGENASE MATURATION FACTOR HYBG"/>
    <property type="match status" value="1"/>
</dbReference>
<dbReference type="Pfam" id="PF01455">
    <property type="entry name" value="HupF_HypC"/>
    <property type="match status" value="1"/>
</dbReference>
<dbReference type="PRINTS" id="PR00445">
    <property type="entry name" value="HUPFHYPC"/>
</dbReference>
<dbReference type="SUPFAM" id="SSF159127">
    <property type="entry name" value="HupF/HypC-like"/>
    <property type="match status" value="1"/>
</dbReference>
<dbReference type="PROSITE" id="PS01097">
    <property type="entry name" value="HUPF_HYPC"/>
    <property type="match status" value="1"/>
</dbReference>
<evidence type="ECO:0000250" key="1">
    <source>
        <dbReference type="UniProtKB" id="P0AAM3"/>
    </source>
</evidence>
<evidence type="ECO:0000305" key="2"/>
<proteinExistence type="inferred from homology"/>
<feature type="chain" id="PRO_0000201394" description="Hydrogenase maturation factor HypC">
    <location>
        <begin position="1"/>
        <end position="84"/>
    </location>
</feature>
<name>HYPC_AZOCH</name>
<comment type="function">
    <text evidence="1">Involved in the maturation of [NiFe] hydrogenases. Involved in the biosynthesis of the Fe(CN)(2)CO cofactor.</text>
</comment>
<comment type="pathway">
    <text evidence="1">Protein modification; [NiFe] hydrogenase maturation.</text>
</comment>
<comment type="similarity">
    <text evidence="2">Belongs to the HupF/HypC family.</text>
</comment>
<protein>
    <recommendedName>
        <fullName evidence="1">Hydrogenase maturation factor HypC</fullName>
    </recommendedName>
</protein>
<organism>
    <name type="scientific">Azotobacter chroococcum mcd 1</name>
    <dbReference type="NCBI Taxonomy" id="355"/>
    <lineage>
        <taxon>Bacteria</taxon>
        <taxon>Pseudomonadati</taxon>
        <taxon>Pseudomonadota</taxon>
        <taxon>Gammaproteobacteria</taxon>
        <taxon>Pseudomonadales</taxon>
        <taxon>Pseudomonadaceae</taxon>
        <taxon>Azotobacter</taxon>
    </lineage>
</organism>
<reference key="1">
    <citation type="journal article" date="1993" name="Gene">
        <title>The Azotobacter chroococcum hydrogenase gene cluster: sequences and genetic analysis of four accessory genes, hupA, hupB, hupY and hupC.</title>
        <authorList>
            <person name="Tibelius K.H."/>
            <person name="Du L."/>
            <person name="Tito D."/>
            <person name="Stejskal F."/>
        </authorList>
    </citation>
    <scope>NUCLEOTIDE SEQUENCE [GENOMIC DNA]</scope>
</reference>
<reference key="2">
    <citation type="journal article" date="1993" name="Gene">
        <authorList>
            <person name="Tibelius K.H."/>
            <person name="Du L."/>
            <person name="Tito D."/>
            <person name="Stejskal F."/>
        </authorList>
    </citation>
    <scope>ERRATUM OF PUBMED:8486288</scope>
</reference>